<organismHost>
    <name type="scientific">Macaca mulatta</name>
    <name type="common">Rhesus macaque</name>
    <dbReference type="NCBI Taxonomy" id="9544"/>
</organismHost>
<comment type="function">
    <text evidence="1">The surface protein (SU) attaches the virus to the host cell by binding to its receptor. This interaction triggers the refolding of the transmembrane protein (TM) and is thought to activate its fusogenic potential by unmasking its fusion peptide. Fusion occurs at the host cell plasma membrane (By similarity).</text>
</comment>
<comment type="function">
    <text evidence="1">The transmembrane protein (TM) acts as a class I viral fusion protein. Under the current model, the protein has at least 3 conformational states: pre-fusion native state, pre-hairpin intermediate state, and post-fusion hairpin state. During viral and target cell membrane fusion, the coiled coil regions (heptad repeats) assume a trimer-of-hairpins structure, positioning the fusion peptide in close proximity to the C-terminal region of the ectodomain. The formation of this structure appears to drive apposition and subsequent fusion of viral and target cell membranes. Membranes fusion leads to delivery of the nucleocapsid into the cytoplasm (By similarity).</text>
</comment>
<comment type="subunit">
    <text evidence="1">The mature envelope protein (Env) consists of a trimer of SU-TM heterodimers attached by a labile interchain disulfide bond.</text>
</comment>
<comment type="subcellular location">
    <molecule>Transmembrane protein</molecule>
    <subcellularLocation>
        <location evidence="1">Virion membrane</location>
        <topology evidence="1">Single-pass type I membrane protein</topology>
    </subcellularLocation>
    <subcellularLocation>
        <location evidence="1">Host cell membrane</location>
        <topology evidence="1">Single-pass type I membrane protein</topology>
    </subcellularLocation>
</comment>
<comment type="subcellular location">
    <molecule>Surface protein</molecule>
    <subcellularLocation>
        <location>Virion membrane</location>
        <topology>Peripheral membrane protein</topology>
    </subcellularLocation>
    <subcellularLocation>
        <location evidence="1">Host cell membrane</location>
        <topology evidence="1">Peripheral membrane protein</topology>
    </subcellularLocation>
    <text evidence="1">The surface protein is not anchored to the viral envelope, but associates with the extravirion surface through its binding to TM. Both proteins are thought to be concentrated at the site of budding and incorporated into the virions possibly by contacts between the cytoplasmic tail of Env and the N-terminus of Gag (By similarity).</text>
</comment>
<comment type="domain">
    <text evidence="1">The YXXL motif is involved in determining the exact site of viral release at the surface of infected mononuclear cells and promotes endocytosis.</text>
</comment>
<comment type="domain">
    <text evidence="1">The 17 amino acids long immunosuppressive region is present in many retroviral envelope proteins. Synthetic peptides derived from this relatively conserved sequence inhibit immune function in vitro and in vivo (By similarity).</text>
</comment>
<comment type="PTM">
    <text evidence="1">Specific enzymatic cleavages in vivo yield mature proteins. Envelope glycoproteins are synthesized as an inactive precursor that is N-glycosylated and processed likely by host cell furin or by a furin-like protease in the Golgi to yield the mature SU and TM proteins. The cleavage site between SU and TM requires the minimal sequence [KR]-X-[KR]-R. The R-peptide is released from the C-terminus of the cytoplasmic tail of the TM protein upon particle formation as a result of proteolytic cleavage by the viral protease. Cleavage of this peptide is required for TM to become fusogenic (By similarity).</text>
</comment>
<comment type="PTM">
    <text evidence="1">The CXXC motif is highly conserved across a broad range of retroviral envelope proteins. It is thought to participate in the formation of a labile disulfide bond possibly with the CX6CC motif present in the transmembrane protein. Isomerization of the intersubunit disulfide bond to an SU intrachain disulfide bond is thought to occur upon receptor recognition in order to allow membrane fusion (By similarity).</text>
</comment>
<comment type="sequence caution" evidence="3">
    <conflict type="erroneous initiation">
        <sequence resource="EMBL-CDS" id="AAA47563"/>
    </conflict>
</comment>
<keyword id="KW-0165">Cleavage on pair of basic residues</keyword>
<keyword id="KW-0175">Coiled coil</keyword>
<keyword id="KW-1015">Disulfide bond</keyword>
<keyword id="KW-1169">Fusion of virus membrane with host cell membrane</keyword>
<keyword id="KW-1168">Fusion of virus membrane with host membrane</keyword>
<keyword id="KW-0325">Glycoprotein</keyword>
<keyword id="KW-1032">Host cell membrane</keyword>
<keyword id="KW-1043">Host membrane</keyword>
<keyword id="KW-0945">Host-virus interaction</keyword>
<keyword id="KW-0472">Membrane</keyword>
<keyword id="KW-0732">Signal</keyword>
<keyword id="KW-0812">Transmembrane</keyword>
<keyword id="KW-1133">Transmembrane helix</keyword>
<keyword id="KW-1161">Viral attachment to host cell</keyword>
<keyword id="KW-0261">Viral envelope protein</keyword>
<keyword id="KW-1162">Viral penetration into host cytoplasm</keyword>
<keyword id="KW-0946">Virion</keyword>
<keyword id="KW-1160">Virus entry into host cell</keyword>
<accession>P51515</accession>
<name>ENV_SRV2</name>
<organism>
    <name type="scientific">Simian retrovirus SRV-2</name>
    <dbReference type="NCBI Taxonomy" id="39068"/>
    <lineage>
        <taxon>Viruses</taxon>
        <taxon>Riboviria</taxon>
        <taxon>Pararnavirae</taxon>
        <taxon>Artverviricota</taxon>
        <taxon>Revtraviricetes</taxon>
        <taxon>Ortervirales</taxon>
        <taxon>Retroviridae</taxon>
        <taxon>Orthoretrovirinae</taxon>
        <taxon>Betaretrovirus</taxon>
        <taxon>Mason-Pfizer monkey virus</taxon>
    </lineage>
</organism>
<gene>
    <name type="primary">env</name>
</gene>
<proteinExistence type="inferred from homology"/>
<sequence>MTLKDIPFWRVLLIFQTARVYAGFGDPREAITMIHQQHGKPCDCAGGYVNAAPTVYLAAVSCSSHTAYQPSDSLKWRCVSNPTLANGENIGNCPCKTFKESVHSSCYTAYQECFFGNKTYYTAILASNRAPTIGTSNVPTVLGNTHNLLSAGCTGNVGQPICWNPKAPVHISDGGGPQDKAREIAVQKRLEEIHKSLFPELRYHPLALPKARGKEKIDAQTFNLLTATYSLLNKSNPNLANECWLCLPSGNPIPLAIPSNDSFLGSNLSCPIIPPLLVQPLEFMNLINASCFYSPFQNNSFDVDVGLVEFANCSTTLNISHSLCAPNSSVFVCGNNKAYTYLPSNWTGTCVLATLLPDIDIVPGDAPVPVPAIDHYLHRARRAVQFIPLLVGLGITTAVSTGTAGLGYSITQYTKLSRQLISDVQAISSTIQDLQDQVDSLAEVVLQNRRGLDLLTAEQGGICLALQEKCCFYANKSGIVRDKIKRLQEDLEKRRKEIIDNPFWTGLHGLLPYLLPLLGPLFCLLLLITFGPLIFNKIITFVKQQIDAIQAKPIQVHYHRLEQEDNGGVYLRVS</sequence>
<feature type="signal peptide" evidence="2">
    <location>
        <begin position="1"/>
        <end position="22"/>
    </location>
</feature>
<feature type="chain" id="PRO_0000239605" description="Envelope glycoprotein">
    <location>
        <begin position="23"/>
        <end position="574"/>
    </location>
</feature>
<feature type="chain" id="PRO_0000040805" description="Surface protein" evidence="1">
    <location>
        <begin position="23"/>
        <end position="382"/>
    </location>
</feature>
<feature type="chain" id="PRO_0000040806" description="Transmembrane protein" evidence="1">
    <location>
        <begin position="383"/>
        <end position="556"/>
    </location>
</feature>
<feature type="peptide" id="PRO_0000239606" description="R-peptide" evidence="1">
    <location>
        <begin position="557"/>
        <end position="574"/>
    </location>
</feature>
<feature type="topological domain" description="Extracellular" evidence="2">
    <location>
        <begin position="23"/>
        <end position="514"/>
    </location>
</feature>
<feature type="transmembrane region" description="Helical" evidence="2">
    <location>
        <begin position="515"/>
        <end position="535"/>
    </location>
</feature>
<feature type="topological domain" description="Cytoplasmic" evidence="2">
    <location>
        <begin position="536"/>
        <end position="574"/>
    </location>
</feature>
<feature type="region of interest" description="Fusion peptide" evidence="1">
    <location>
        <begin position="386"/>
        <end position="406"/>
    </location>
</feature>
<feature type="region of interest" description="Immunosuppression" evidence="1">
    <location>
        <begin position="446"/>
        <end position="462"/>
    </location>
</feature>
<feature type="coiled-coil region" evidence="2">
    <location>
        <begin position="407"/>
        <end position="457"/>
    </location>
</feature>
<feature type="coiled-coil region" evidence="2">
    <location>
        <begin position="467"/>
        <end position="503"/>
    </location>
</feature>
<feature type="short sequence motif" description="CXXC">
    <location>
        <begin position="243"/>
        <end position="246"/>
    </location>
</feature>
<feature type="short sequence motif" description="CX6CC">
    <location>
        <begin position="463"/>
        <end position="471"/>
    </location>
</feature>
<feature type="short sequence motif" description="YXXL motif; contains endocytosis signal" evidence="1">
    <location>
        <begin position="558"/>
        <end position="561"/>
    </location>
</feature>
<feature type="site" description="Cleavage; by host" evidence="1">
    <location>
        <begin position="382"/>
        <end position="383"/>
    </location>
</feature>
<feature type="site" description="Cleavage; by viral protease" evidence="1">
    <location>
        <begin position="556"/>
        <end position="557"/>
    </location>
</feature>
<feature type="glycosylation site" description="N-linked (GlcNAc...) asparagine; by host" evidence="2">
    <location>
        <position position="117"/>
    </location>
</feature>
<feature type="glycosylation site" description="N-linked (GlcNAc...) asparagine; by host" evidence="2">
    <location>
        <position position="233"/>
    </location>
</feature>
<feature type="glycosylation site" description="N-linked (GlcNAc...) asparagine; by host" evidence="2">
    <location>
        <position position="260"/>
    </location>
</feature>
<feature type="glycosylation site" description="N-linked (GlcNAc...) asparagine; by host" evidence="2">
    <location>
        <position position="267"/>
    </location>
</feature>
<feature type="glycosylation site" description="N-linked (GlcNAc...) asparagine; by host" evidence="2">
    <location>
        <position position="288"/>
    </location>
</feature>
<feature type="glycosylation site" description="N-linked (GlcNAc...) asparagine; by host" evidence="2">
    <location>
        <position position="298"/>
    </location>
</feature>
<feature type="glycosylation site" description="N-linked (GlcNAc...) asparagine; by host" evidence="2">
    <location>
        <position position="312"/>
    </location>
</feature>
<feature type="glycosylation site" description="N-linked (GlcNAc...) asparagine; by host" evidence="2">
    <location>
        <position position="318"/>
    </location>
</feature>
<feature type="glycosylation site" description="N-linked (GlcNAc...) asparagine; by host" evidence="2">
    <location>
        <position position="327"/>
    </location>
</feature>
<feature type="glycosylation site" description="N-linked (GlcNAc...) asparagine; by host" evidence="2">
    <location>
        <position position="345"/>
    </location>
</feature>
<feature type="glycosylation site" description="N-linked (GlcNAc...) asparagine; by host" evidence="2">
    <location>
        <position position="475"/>
    </location>
</feature>
<feature type="disulfide bond" description="Interchain (between SU and TM chains, or C-246 with C-471); in linked form" evidence="1">
    <location>
        <begin position="243"/>
        <end position="471"/>
    </location>
</feature>
<feature type="disulfide bond" evidence="1">
    <location>
        <begin position="243"/>
        <end position="246"/>
    </location>
</feature>
<feature type="disulfide bond" evidence="1">
    <location>
        <begin position="463"/>
        <end position="470"/>
    </location>
</feature>
<reference key="1">
    <citation type="journal article" date="1987" name="Virology">
        <title>Sequence relationships of type D retroviruses which cause simian acquired immunodeficiency syndrome.</title>
        <authorList>
            <person name="Thayer R.M."/>
            <person name="Power M.D."/>
            <person name="Bryant M.L."/>
            <person name="Gardner M.B."/>
            <person name="Barr P.J."/>
            <person name="Luciw P.A."/>
        </authorList>
    </citation>
    <scope>NUCLEOTIDE SEQUENCE [GENOMIC RNA]</scope>
</reference>
<dbReference type="EMBL" id="M16605">
    <property type="protein sequence ID" value="AAA47563.1"/>
    <property type="status" value="ALT_INIT"/>
    <property type="molecule type" value="Genomic_RNA"/>
</dbReference>
<dbReference type="SMR" id="P51515"/>
<dbReference type="GlyCosmos" id="P51515">
    <property type="glycosylation" value="11 sites, No reported glycans"/>
</dbReference>
<dbReference type="Proteomes" id="UP000007229">
    <property type="component" value="Genome"/>
</dbReference>
<dbReference type="GO" id="GO:0020002">
    <property type="term" value="C:host cell plasma membrane"/>
    <property type="evidence" value="ECO:0007669"/>
    <property type="project" value="UniProtKB-SubCell"/>
</dbReference>
<dbReference type="GO" id="GO:0016020">
    <property type="term" value="C:membrane"/>
    <property type="evidence" value="ECO:0007669"/>
    <property type="project" value="UniProtKB-KW"/>
</dbReference>
<dbReference type="GO" id="GO:0019031">
    <property type="term" value="C:viral envelope"/>
    <property type="evidence" value="ECO:0007669"/>
    <property type="project" value="UniProtKB-KW"/>
</dbReference>
<dbReference type="GO" id="GO:0055036">
    <property type="term" value="C:virion membrane"/>
    <property type="evidence" value="ECO:0007669"/>
    <property type="project" value="UniProtKB-SubCell"/>
</dbReference>
<dbReference type="GO" id="GO:0019064">
    <property type="term" value="P:fusion of virus membrane with host plasma membrane"/>
    <property type="evidence" value="ECO:0007669"/>
    <property type="project" value="UniProtKB-KW"/>
</dbReference>
<dbReference type="GO" id="GO:0046718">
    <property type="term" value="P:symbiont entry into host cell"/>
    <property type="evidence" value="ECO:0007669"/>
    <property type="project" value="UniProtKB-KW"/>
</dbReference>
<dbReference type="GO" id="GO:0019062">
    <property type="term" value="P:virion attachment to host cell"/>
    <property type="evidence" value="ECO:0007669"/>
    <property type="project" value="UniProtKB-KW"/>
</dbReference>
<dbReference type="CDD" id="cd09851">
    <property type="entry name" value="HTLV-1-like_HR1-HR2"/>
    <property type="match status" value="1"/>
</dbReference>
<dbReference type="Gene3D" id="1.10.287.210">
    <property type="match status" value="1"/>
</dbReference>
<dbReference type="InterPro" id="IPR018154">
    <property type="entry name" value="TLV/ENV_coat_polyprotein"/>
</dbReference>
<dbReference type="PANTHER" id="PTHR10424:SF75">
    <property type="entry name" value="ENDOGENOUS RETROVIRUS GROUP S71 MEMBER 1 ENV POLYPROTEIN"/>
    <property type="match status" value="1"/>
</dbReference>
<dbReference type="PANTHER" id="PTHR10424">
    <property type="entry name" value="VIRAL ENVELOPE PROTEIN"/>
    <property type="match status" value="1"/>
</dbReference>
<dbReference type="Pfam" id="PF00429">
    <property type="entry name" value="TLV_coat"/>
    <property type="match status" value="1"/>
</dbReference>
<dbReference type="SUPFAM" id="SSF58069">
    <property type="entry name" value="Virus ectodomain"/>
    <property type="match status" value="1"/>
</dbReference>
<evidence type="ECO:0000250" key="1"/>
<evidence type="ECO:0000255" key="2"/>
<evidence type="ECO:0000305" key="3"/>
<protein>
    <recommendedName>
        <fullName>Envelope glycoprotein</fullName>
    </recommendedName>
    <alternativeName>
        <fullName>Env polyprotein</fullName>
    </alternativeName>
    <component>
        <recommendedName>
            <fullName>Surface protein</fullName>
            <shortName>SU</shortName>
        </recommendedName>
        <alternativeName>
            <fullName>Glycoprotein 70</fullName>
            <shortName>gp70</shortName>
        </alternativeName>
    </component>
    <component>
        <recommendedName>
            <fullName>Transmembrane protein</fullName>
            <shortName>TM</shortName>
        </recommendedName>
        <alternativeName>
            <fullName>Glycoprotein 20</fullName>
            <shortName>gp20</shortName>
        </alternativeName>
    </component>
    <component>
        <recommendedName>
            <fullName>R-peptide</fullName>
        </recommendedName>
    </component>
</protein>